<organism>
    <name type="scientific">Francisella tularensis subsp. holarctica (strain LVS)</name>
    <dbReference type="NCBI Taxonomy" id="376619"/>
    <lineage>
        <taxon>Bacteria</taxon>
        <taxon>Pseudomonadati</taxon>
        <taxon>Pseudomonadota</taxon>
        <taxon>Gammaproteobacteria</taxon>
        <taxon>Thiotrichales</taxon>
        <taxon>Francisellaceae</taxon>
        <taxon>Francisella</taxon>
    </lineage>
</organism>
<feature type="chain" id="PRO_0000270300" description="Methionine import ATP-binding protein MetN">
    <location>
        <begin position="1"/>
        <end position="350"/>
    </location>
</feature>
<feature type="domain" description="ABC transporter" evidence="1">
    <location>
        <begin position="2"/>
        <end position="241"/>
    </location>
</feature>
<feature type="binding site" evidence="1">
    <location>
        <begin position="38"/>
        <end position="45"/>
    </location>
    <ligand>
        <name>ATP</name>
        <dbReference type="ChEBI" id="CHEBI:30616"/>
    </ligand>
</feature>
<evidence type="ECO:0000255" key="1">
    <source>
        <dbReference type="HAMAP-Rule" id="MF_01719"/>
    </source>
</evidence>
<comment type="function">
    <text evidence="1">Part of the ABC transporter complex MetNIQ involved in methionine import. Responsible for energy coupling to the transport system.</text>
</comment>
<comment type="catalytic activity">
    <reaction evidence="1">
        <text>L-methionine(out) + ATP + H2O = L-methionine(in) + ADP + phosphate + H(+)</text>
        <dbReference type="Rhea" id="RHEA:29779"/>
        <dbReference type="ChEBI" id="CHEBI:15377"/>
        <dbReference type="ChEBI" id="CHEBI:15378"/>
        <dbReference type="ChEBI" id="CHEBI:30616"/>
        <dbReference type="ChEBI" id="CHEBI:43474"/>
        <dbReference type="ChEBI" id="CHEBI:57844"/>
        <dbReference type="ChEBI" id="CHEBI:456216"/>
        <dbReference type="EC" id="7.4.2.11"/>
    </reaction>
</comment>
<comment type="catalytic activity">
    <reaction evidence="1">
        <text>D-methionine(out) + ATP + H2O = D-methionine(in) + ADP + phosphate + H(+)</text>
        <dbReference type="Rhea" id="RHEA:29767"/>
        <dbReference type="ChEBI" id="CHEBI:15377"/>
        <dbReference type="ChEBI" id="CHEBI:15378"/>
        <dbReference type="ChEBI" id="CHEBI:30616"/>
        <dbReference type="ChEBI" id="CHEBI:43474"/>
        <dbReference type="ChEBI" id="CHEBI:57932"/>
        <dbReference type="ChEBI" id="CHEBI:456216"/>
        <dbReference type="EC" id="7.4.2.11"/>
    </reaction>
</comment>
<comment type="subunit">
    <text evidence="1">The complex is composed of two ATP-binding proteins (MetN), two transmembrane proteins (MetI) and a solute-binding protein (MetQ).</text>
</comment>
<comment type="subcellular location">
    <subcellularLocation>
        <location evidence="1">Cell inner membrane</location>
        <topology evidence="1">Peripheral membrane protein</topology>
    </subcellularLocation>
</comment>
<comment type="similarity">
    <text evidence="1">Belongs to the ABC transporter superfamily. Methionine importer (TC 3.A.1.24) family.</text>
</comment>
<accession>Q2A3Z2</accession>
<reference key="1">
    <citation type="submission" date="2006-03" db="EMBL/GenBank/DDBJ databases">
        <title>Complete genome sequence of Francisella tularensis LVS (Live Vaccine Strain).</title>
        <authorList>
            <person name="Chain P."/>
            <person name="Larimer F."/>
            <person name="Land M."/>
            <person name="Stilwagen S."/>
            <person name="Larsson P."/>
            <person name="Bearden S."/>
            <person name="Chu M."/>
            <person name="Oyston P."/>
            <person name="Forsman M."/>
            <person name="Andersson S."/>
            <person name="Lindler L."/>
            <person name="Titball R."/>
            <person name="Garcia E."/>
        </authorList>
    </citation>
    <scope>NUCLEOTIDE SEQUENCE [LARGE SCALE GENOMIC DNA]</scope>
    <source>
        <strain>LVS</strain>
    </source>
</reference>
<sequence length="350" mass="39193">MIQIKNLKKEYRTNNTSNLVLDNINLEIKQGEIFGIIGHSGAGKSSLLRCLNLLEQPTDGSIFIADENITKKNSKQLREFRKKVAMIFQHFNLLSSRNVFENIALPLEIQGIPKSEIKKRVFELLDLVELPNKANAYPQELSGGQKQKVAIARALALNPLVLLSDEATSALDPTSTKQILALLKRLNKELGLTIVLITHEMDVVRKICDRVAIIDKGRIAEMGKTLDVFLNPQAPVTRSFVETSIHTKVPDFIAKKLQDNPYSYDNTYPVVQLTFYGDKGKMPIIAEISRQFNATASIIQANIETIQDQIVGIAICHITGERQDWENALRFLSNQDVNLKVLGYATADNI</sequence>
<dbReference type="EC" id="7.4.2.11" evidence="1"/>
<dbReference type="EMBL" id="AM233362">
    <property type="protein sequence ID" value="CAJ79277.1"/>
    <property type="molecule type" value="Genomic_DNA"/>
</dbReference>
<dbReference type="RefSeq" id="WP_003015426.1">
    <property type="nucleotide sequence ID" value="NZ_CP009694.1"/>
</dbReference>
<dbReference type="SMR" id="Q2A3Z2"/>
<dbReference type="KEGG" id="ftl:FTL_0838"/>
<dbReference type="Proteomes" id="UP000001944">
    <property type="component" value="Chromosome"/>
</dbReference>
<dbReference type="GO" id="GO:0005886">
    <property type="term" value="C:plasma membrane"/>
    <property type="evidence" value="ECO:0007669"/>
    <property type="project" value="UniProtKB-SubCell"/>
</dbReference>
<dbReference type="GO" id="GO:0033232">
    <property type="term" value="F:ABC-type D-methionine transporter activity"/>
    <property type="evidence" value="ECO:0007669"/>
    <property type="project" value="UniProtKB-EC"/>
</dbReference>
<dbReference type="GO" id="GO:0005524">
    <property type="term" value="F:ATP binding"/>
    <property type="evidence" value="ECO:0007669"/>
    <property type="project" value="UniProtKB-KW"/>
</dbReference>
<dbReference type="GO" id="GO:0016887">
    <property type="term" value="F:ATP hydrolysis activity"/>
    <property type="evidence" value="ECO:0007669"/>
    <property type="project" value="InterPro"/>
</dbReference>
<dbReference type="CDD" id="cd03258">
    <property type="entry name" value="ABC_MetN_methionine_transporter"/>
    <property type="match status" value="1"/>
</dbReference>
<dbReference type="FunFam" id="3.40.50.300:FF:000056">
    <property type="entry name" value="Cell division ATP-binding protein FtsE"/>
    <property type="match status" value="1"/>
</dbReference>
<dbReference type="Gene3D" id="3.30.70.260">
    <property type="match status" value="1"/>
</dbReference>
<dbReference type="Gene3D" id="3.40.50.300">
    <property type="entry name" value="P-loop containing nucleotide triphosphate hydrolases"/>
    <property type="match status" value="1"/>
</dbReference>
<dbReference type="InterPro" id="IPR003593">
    <property type="entry name" value="AAA+_ATPase"/>
</dbReference>
<dbReference type="InterPro" id="IPR003439">
    <property type="entry name" value="ABC_transporter-like_ATP-bd"/>
</dbReference>
<dbReference type="InterPro" id="IPR017871">
    <property type="entry name" value="ABC_transporter-like_CS"/>
</dbReference>
<dbReference type="InterPro" id="IPR045865">
    <property type="entry name" value="ACT-like_dom_sf"/>
</dbReference>
<dbReference type="InterPro" id="IPR041701">
    <property type="entry name" value="MetN_ABC"/>
</dbReference>
<dbReference type="InterPro" id="IPR050086">
    <property type="entry name" value="MetN_ABC_transporter-like"/>
</dbReference>
<dbReference type="InterPro" id="IPR018449">
    <property type="entry name" value="NIL_domain"/>
</dbReference>
<dbReference type="InterPro" id="IPR027417">
    <property type="entry name" value="P-loop_NTPase"/>
</dbReference>
<dbReference type="PANTHER" id="PTHR43166">
    <property type="entry name" value="AMINO ACID IMPORT ATP-BINDING PROTEIN"/>
    <property type="match status" value="1"/>
</dbReference>
<dbReference type="PANTHER" id="PTHR43166:SF30">
    <property type="entry name" value="METHIONINE IMPORT ATP-BINDING PROTEIN METN"/>
    <property type="match status" value="1"/>
</dbReference>
<dbReference type="Pfam" id="PF00005">
    <property type="entry name" value="ABC_tran"/>
    <property type="match status" value="1"/>
</dbReference>
<dbReference type="Pfam" id="PF09383">
    <property type="entry name" value="NIL"/>
    <property type="match status" value="1"/>
</dbReference>
<dbReference type="SMART" id="SM00382">
    <property type="entry name" value="AAA"/>
    <property type="match status" value="1"/>
</dbReference>
<dbReference type="SMART" id="SM00930">
    <property type="entry name" value="NIL"/>
    <property type="match status" value="1"/>
</dbReference>
<dbReference type="SUPFAM" id="SSF55021">
    <property type="entry name" value="ACT-like"/>
    <property type="match status" value="1"/>
</dbReference>
<dbReference type="SUPFAM" id="SSF52540">
    <property type="entry name" value="P-loop containing nucleoside triphosphate hydrolases"/>
    <property type="match status" value="1"/>
</dbReference>
<dbReference type="PROSITE" id="PS00211">
    <property type="entry name" value="ABC_TRANSPORTER_1"/>
    <property type="match status" value="1"/>
</dbReference>
<dbReference type="PROSITE" id="PS50893">
    <property type="entry name" value="ABC_TRANSPORTER_2"/>
    <property type="match status" value="1"/>
</dbReference>
<dbReference type="PROSITE" id="PS51264">
    <property type="entry name" value="METN"/>
    <property type="match status" value="1"/>
</dbReference>
<gene>
    <name evidence="1" type="primary">metN</name>
    <name type="ordered locus">FTL_0838</name>
</gene>
<keyword id="KW-0029">Amino-acid transport</keyword>
<keyword id="KW-0067">ATP-binding</keyword>
<keyword id="KW-0997">Cell inner membrane</keyword>
<keyword id="KW-1003">Cell membrane</keyword>
<keyword id="KW-0472">Membrane</keyword>
<keyword id="KW-0547">Nucleotide-binding</keyword>
<keyword id="KW-1185">Reference proteome</keyword>
<keyword id="KW-1278">Translocase</keyword>
<keyword id="KW-0813">Transport</keyword>
<protein>
    <recommendedName>
        <fullName evidence="1">Methionine import ATP-binding protein MetN</fullName>
        <ecNumber evidence="1">7.4.2.11</ecNumber>
    </recommendedName>
</protein>
<proteinExistence type="inferred from homology"/>
<name>METN_FRATH</name>